<dbReference type="EC" id="2.7.4.3" evidence="1"/>
<dbReference type="EMBL" id="BX293980">
    <property type="protein sequence ID" value="CAE77343.1"/>
    <property type="molecule type" value="Genomic_DNA"/>
</dbReference>
<dbReference type="RefSeq" id="NP_975701.1">
    <property type="nucleotide sequence ID" value="NC_005364.2"/>
</dbReference>
<dbReference type="RefSeq" id="WP_011166893.1">
    <property type="nucleotide sequence ID" value="NC_005364.2"/>
</dbReference>
<dbReference type="SMR" id="Q6MSP5"/>
<dbReference type="STRING" id="272632.MSC_0725"/>
<dbReference type="KEGG" id="mmy:MSC_0725"/>
<dbReference type="PATRIC" id="fig|272632.4.peg.782"/>
<dbReference type="eggNOG" id="COG0563">
    <property type="taxonomic scope" value="Bacteria"/>
</dbReference>
<dbReference type="HOGENOM" id="CLU_032354_1_2_14"/>
<dbReference type="UniPathway" id="UPA00588">
    <property type="reaction ID" value="UER00649"/>
</dbReference>
<dbReference type="Proteomes" id="UP000001016">
    <property type="component" value="Chromosome"/>
</dbReference>
<dbReference type="GO" id="GO:0005737">
    <property type="term" value="C:cytoplasm"/>
    <property type="evidence" value="ECO:0007669"/>
    <property type="project" value="UniProtKB-SubCell"/>
</dbReference>
<dbReference type="GO" id="GO:0004017">
    <property type="term" value="F:adenylate kinase activity"/>
    <property type="evidence" value="ECO:0007669"/>
    <property type="project" value="UniProtKB-UniRule"/>
</dbReference>
<dbReference type="GO" id="GO:0005524">
    <property type="term" value="F:ATP binding"/>
    <property type="evidence" value="ECO:0007669"/>
    <property type="project" value="UniProtKB-UniRule"/>
</dbReference>
<dbReference type="GO" id="GO:0008270">
    <property type="term" value="F:zinc ion binding"/>
    <property type="evidence" value="ECO:0007669"/>
    <property type="project" value="UniProtKB-UniRule"/>
</dbReference>
<dbReference type="GO" id="GO:0044209">
    <property type="term" value="P:AMP salvage"/>
    <property type="evidence" value="ECO:0007669"/>
    <property type="project" value="UniProtKB-UniRule"/>
</dbReference>
<dbReference type="CDD" id="cd01428">
    <property type="entry name" value="ADK"/>
    <property type="match status" value="1"/>
</dbReference>
<dbReference type="FunFam" id="3.40.50.300:FF:000106">
    <property type="entry name" value="Adenylate kinase mitochondrial"/>
    <property type="match status" value="1"/>
</dbReference>
<dbReference type="Gene3D" id="3.40.50.300">
    <property type="entry name" value="P-loop containing nucleotide triphosphate hydrolases"/>
    <property type="match status" value="1"/>
</dbReference>
<dbReference type="HAMAP" id="MF_00235">
    <property type="entry name" value="Adenylate_kinase_Adk"/>
    <property type="match status" value="1"/>
</dbReference>
<dbReference type="InterPro" id="IPR006259">
    <property type="entry name" value="Adenyl_kin_sub"/>
</dbReference>
<dbReference type="InterPro" id="IPR000850">
    <property type="entry name" value="Adenylat/UMP-CMP_kin"/>
</dbReference>
<dbReference type="InterPro" id="IPR033690">
    <property type="entry name" value="Adenylat_kinase_CS"/>
</dbReference>
<dbReference type="InterPro" id="IPR007862">
    <property type="entry name" value="Adenylate_kinase_lid-dom"/>
</dbReference>
<dbReference type="InterPro" id="IPR027417">
    <property type="entry name" value="P-loop_NTPase"/>
</dbReference>
<dbReference type="NCBIfam" id="TIGR01351">
    <property type="entry name" value="adk"/>
    <property type="match status" value="1"/>
</dbReference>
<dbReference type="NCBIfam" id="NF001381">
    <property type="entry name" value="PRK00279.1-3"/>
    <property type="match status" value="1"/>
</dbReference>
<dbReference type="PANTHER" id="PTHR23359">
    <property type="entry name" value="NUCLEOTIDE KINASE"/>
    <property type="match status" value="1"/>
</dbReference>
<dbReference type="Pfam" id="PF00406">
    <property type="entry name" value="ADK"/>
    <property type="match status" value="1"/>
</dbReference>
<dbReference type="Pfam" id="PF05191">
    <property type="entry name" value="ADK_lid"/>
    <property type="match status" value="1"/>
</dbReference>
<dbReference type="PRINTS" id="PR00094">
    <property type="entry name" value="ADENYLTKNASE"/>
</dbReference>
<dbReference type="SUPFAM" id="SSF52540">
    <property type="entry name" value="P-loop containing nucleoside triphosphate hydrolases"/>
    <property type="match status" value="1"/>
</dbReference>
<dbReference type="PROSITE" id="PS00113">
    <property type="entry name" value="ADENYLATE_KINASE"/>
    <property type="match status" value="1"/>
</dbReference>
<keyword id="KW-0067">ATP-binding</keyword>
<keyword id="KW-0963">Cytoplasm</keyword>
<keyword id="KW-0418">Kinase</keyword>
<keyword id="KW-0479">Metal-binding</keyword>
<keyword id="KW-0545">Nucleotide biosynthesis</keyword>
<keyword id="KW-0547">Nucleotide-binding</keyword>
<keyword id="KW-1185">Reference proteome</keyword>
<keyword id="KW-0808">Transferase</keyword>
<keyword id="KW-0862">Zinc</keyword>
<proteinExistence type="inferred from homology"/>
<comment type="function">
    <text evidence="1">Catalyzes the reversible transfer of the terminal phosphate group between ATP and AMP. Plays an important role in cellular energy homeostasis and in adenine nucleotide metabolism.</text>
</comment>
<comment type="catalytic activity">
    <reaction evidence="1">
        <text>AMP + ATP = 2 ADP</text>
        <dbReference type="Rhea" id="RHEA:12973"/>
        <dbReference type="ChEBI" id="CHEBI:30616"/>
        <dbReference type="ChEBI" id="CHEBI:456215"/>
        <dbReference type="ChEBI" id="CHEBI:456216"/>
        <dbReference type="EC" id="2.7.4.3"/>
    </reaction>
</comment>
<comment type="pathway">
    <text evidence="1">Purine metabolism; AMP biosynthesis via salvage pathway; AMP from ADP: step 1/1.</text>
</comment>
<comment type="subunit">
    <text evidence="1">Monomer.</text>
</comment>
<comment type="subcellular location">
    <subcellularLocation>
        <location evidence="1">Cytoplasm</location>
    </subcellularLocation>
</comment>
<comment type="domain">
    <text evidence="1">Consists of three domains, a large central CORE domain and two small peripheral domains, NMPbind and LID, which undergo movements during catalysis. The LID domain closes over the site of phosphoryl transfer upon ATP binding. Assembling and dissambling the active center during each catalytic cycle provides an effective means to prevent ATP hydrolysis. Some bacteria have evolved a zinc-coordinating structure that stabilizes the LID domain.</text>
</comment>
<comment type="similarity">
    <text evidence="1">Belongs to the adenylate kinase family.</text>
</comment>
<reference key="1">
    <citation type="journal article" date="2004" name="Genome Res.">
        <title>The genome sequence of Mycoplasma mycoides subsp. mycoides SC type strain PG1T, the causative agent of contagious bovine pleuropneumonia (CBPP).</title>
        <authorList>
            <person name="Westberg J."/>
            <person name="Persson A."/>
            <person name="Holmberg A."/>
            <person name="Goesmann A."/>
            <person name="Lundeberg J."/>
            <person name="Johansson K.-E."/>
            <person name="Pettersson B."/>
            <person name="Uhlen M."/>
        </authorList>
    </citation>
    <scope>NUCLEOTIDE SEQUENCE [LARGE SCALE GENOMIC DNA]</scope>
    <source>
        <strain>CCUG 32753 / NCTC 10114 / PG1</strain>
    </source>
</reference>
<feature type="chain" id="PRO_0000158801" description="Adenylate kinase">
    <location>
        <begin position="1"/>
        <end position="213"/>
    </location>
</feature>
<feature type="region of interest" description="NMP" evidence="1">
    <location>
        <begin position="30"/>
        <end position="59"/>
    </location>
</feature>
<feature type="region of interest" description="LID" evidence="1">
    <location>
        <begin position="124"/>
        <end position="161"/>
    </location>
</feature>
<feature type="binding site" evidence="1">
    <location>
        <begin position="10"/>
        <end position="15"/>
    </location>
    <ligand>
        <name>ATP</name>
        <dbReference type="ChEBI" id="CHEBI:30616"/>
    </ligand>
</feature>
<feature type="binding site" evidence="1">
    <location>
        <position position="31"/>
    </location>
    <ligand>
        <name>AMP</name>
        <dbReference type="ChEBI" id="CHEBI:456215"/>
    </ligand>
</feature>
<feature type="binding site" evidence="1">
    <location>
        <position position="36"/>
    </location>
    <ligand>
        <name>AMP</name>
        <dbReference type="ChEBI" id="CHEBI:456215"/>
    </ligand>
</feature>
<feature type="binding site" evidence="1">
    <location>
        <begin position="57"/>
        <end position="59"/>
    </location>
    <ligand>
        <name>AMP</name>
        <dbReference type="ChEBI" id="CHEBI:456215"/>
    </ligand>
</feature>
<feature type="binding site" evidence="1">
    <location>
        <begin position="83"/>
        <end position="86"/>
    </location>
    <ligand>
        <name>AMP</name>
        <dbReference type="ChEBI" id="CHEBI:456215"/>
    </ligand>
</feature>
<feature type="binding site" evidence="1">
    <location>
        <position position="90"/>
    </location>
    <ligand>
        <name>AMP</name>
        <dbReference type="ChEBI" id="CHEBI:456215"/>
    </ligand>
</feature>
<feature type="binding site" evidence="1">
    <location>
        <position position="125"/>
    </location>
    <ligand>
        <name>ATP</name>
        <dbReference type="ChEBI" id="CHEBI:30616"/>
    </ligand>
</feature>
<feature type="binding site" evidence="1">
    <location>
        <position position="128"/>
    </location>
    <ligand>
        <name>Zn(2+)</name>
        <dbReference type="ChEBI" id="CHEBI:29105"/>
        <note>structural</note>
    </ligand>
</feature>
<feature type="binding site" evidence="1">
    <location>
        <position position="131"/>
    </location>
    <ligand>
        <name>Zn(2+)</name>
        <dbReference type="ChEBI" id="CHEBI:29105"/>
        <note>structural</note>
    </ligand>
</feature>
<feature type="binding site" evidence="1">
    <location>
        <begin position="134"/>
        <end position="135"/>
    </location>
    <ligand>
        <name>ATP</name>
        <dbReference type="ChEBI" id="CHEBI:30616"/>
    </ligand>
</feature>
<feature type="binding site" evidence="1">
    <location>
        <position position="148"/>
    </location>
    <ligand>
        <name>Zn(2+)</name>
        <dbReference type="ChEBI" id="CHEBI:29105"/>
        <note>structural</note>
    </ligand>
</feature>
<feature type="binding site" evidence="1">
    <location>
        <position position="151"/>
    </location>
    <ligand>
        <name>Zn(2+)</name>
        <dbReference type="ChEBI" id="CHEBI:29105"/>
        <note>structural</note>
    </ligand>
</feature>
<feature type="binding site" evidence="1">
    <location>
        <position position="158"/>
    </location>
    <ligand>
        <name>AMP</name>
        <dbReference type="ChEBI" id="CHEBI:456215"/>
    </ligand>
</feature>
<feature type="binding site" evidence="1">
    <location>
        <position position="169"/>
    </location>
    <ligand>
        <name>AMP</name>
        <dbReference type="ChEBI" id="CHEBI:456215"/>
    </ligand>
</feature>
<feature type="binding site" evidence="1">
    <location>
        <position position="197"/>
    </location>
    <ligand>
        <name>ATP</name>
        <dbReference type="ChEBI" id="CHEBI:30616"/>
    </ligand>
</feature>
<organism>
    <name type="scientific">Mycoplasma mycoides subsp. mycoides SC (strain CCUG 32753 / NCTC 10114 / PG1)</name>
    <dbReference type="NCBI Taxonomy" id="272632"/>
    <lineage>
        <taxon>Bacteria</taxon>
        <taxon>Bacillati</taxon>
        <taxon>Mycoplasmatota</taxon>
        <taxon>Mollicutes</taxon>
        <taxon>Mycoplasmataceae</taxon>
        <taxon>Mycoplasma</taxon>
    </lineage>
</organism>
<name>KAD_MYCMS</name>
<evidence type="ECO:0000255" key="1">
    <source>
        <dbReference type="HAMAP-Rule" id="MF_00235"/>
    </source>
</evidence>
<sequence length="213" mass="24543">MNIMLLGAPGCGKGTQAEQLVNKLNFIQVSTGDLMRKEISLNTRLGLKCQEYMNAGKYVPDQIVNQIVSQFLKNTNDKLIFDGYPRTLEQAKSLEQMLDLYNKKIDYVFYIDVNDQILIKRITNRLVCPLCKASFNLETRKPKQEGLCDFDNTKLVKRSDDSLDKVQIRLQTYKEQTLPLIDYFKTNSKFIEIKADDLSAEQVFNQIKGELKI</sequence>
<protein>
    <recommendedName>
        <fullName evidence="1">Adenylate kinase</fullName>
        <shortName evidence="1">AK</shortName>
        <ecNumber evidence="1">2.7.4.3</ecNumber>
    </recommendedName>
    <alternativeName>
        <fullName evidence="1">ATP-AMP transphosphorylase</fullName>
    </alternativeName>
    <alternativeName>
        <fullName evidence="1">ATP:AMP phosphotransferase</fullName>
    </alternativeName>
    <alternativeName>
        <fullName evidence="1">Adenylate monophosphate kinase</fullName>
    </alternativeName>
</protein>
<gene>
    <name evidence="1" type="primary">adk</name>
    <name type="ordered locus">MSC_0725</name>
</gene>
<accession>Q6MSP5</accession>